<keyword id="KW-0963">Cytoplasm</keyword>
<keyword id="KW-0275">Fatty acid biosynthesis</keyword>
<keyword id="KW-0276">Fatty acid metabolism</keyword>
<keyword id="KW-0444">Lipid biosynthesis</keyword>
<keyword id="KW-0443">Lipid metabolism</keyword>
<keyword id="KW-0596">Phosphopantetheine</keyword>
<keyword id="KW-0597">Phosphoprotein</keyword>
<keyword id="KW-1185">Reference proteome</keyword>
<dbReference type="EMBL" id="AE014184">
    <property type="protein sequence ID" value="AAO44349.1"/>
    <property type="molecule type" value="Genomic_DNA"/>
</dbReference>
<dbReference type="RefSeq" id="WP_011096465.1">
    <property type="nucleotide sequence ID" value="NC_004572.3"/>
</dbReference>
<dbReference type="SMR" id="Q83N02"/>
<dbReference type="STRING" id="203267.TWT_252"/>
<dbReference type="KEGG" id="twh:TWT_252"/>
<dbReference type="eggNOG" id="COG0236">
    <property type="taxonomic scope" value="Bacteria"/>
</dbReference>
<dbReference type="HOGENOM" id="CLU_108696_5_6_11"/>
<dbReference type="OrthoDB" id="9804551at2"/>
<dbReference type="UniPathway" id="UPA00094"/>
<dbReference type="Proteomes" id="UP000002200">
    <property type="component" value="Chromosome"/>
</dbReference>
<dbReference type="GO" id="GO:0005829">
    <property type="term" value="C:cytosol"/>
    <property type="evidence" value="ECO:0007669"/>
    <property type="project" value="TreeGrafter"/>
</dbReference>
<dbReference type="GO" id="GO:0016020">
    <property type="term" value="C:membrane"/>
    <property type="evidence" value="ECO:0007669"/>
    <property type="project" value="GOC"/>
</dbReference>
<dbReference type="GO" id="GO:0000035">
    <property type="term" value="F:acyl binding"/>
    <property type="evidence" value="ECO:0007669"/>
    <property type="project" value="TreeGrafter"/>
</dbReference>
<dbReference type="GO" id="GO:0000036">
    <property type="term" value="F:acyl carrier activity"/>
    <property type="evidence" value="ECO:0007669"/>
    <property type="project" value="UniProtKB-UniRule"/>
</dbReference>
<dbReference type="GO" id="GO:0009245">
    <property type="term" value="P:lipid A biosynthetic process"/>
    <property type="evidence" value="ECO:0007669"/>
    <property type="project" value="TreeGrafter"/>
</dbReference>
<dbReference type="Gene3D" id="1.10.1200.10">
    <property type="entry name" value="ACP-like"/>
    <property type="match status" value="1"/>
</dbReference>
<dbReference type="HAMAP" id="MF_01217">
    <property type="entry name" value="Acyl_carrier"/>
    <property type="match status" value="1"/>
</dbReference>
<dbReference type="InterPro" id="IPR003231">
    <property type="entry name" value="ACP"/>
</dbReference>
<dbReference type="InterPro" id="IPR036736">
    <property type="entry name" value="ACP-like_sf"/>
</dbReference>
<dbReference type="InterPro" id="IPR009081">
    <property type="entry name" value="PP-bd_ACP"/>
</dbReference>
<dbReference type="NCBIfam" id="NF002147">
    <property type="entry name" value="PRK00982.1-1"/>
    <property type="match status" value="1"/>
</dbReference>
<dbReference type="NCBIfam" id="NF002150">
    <property type="entry name" value="PRK00982.1-4"/>
    <property type="match status" value="1"/>
</dbReference>
<dbReference type="PANTHER" id="PTHR20863">
    <property type="entry name" value="ACYL CARRIER PROTEIN"/>
    <property type="match status" value="1"/>
</dbReference>
<dbReference type="PANTHER" id="PTHR20863:SF76">
    <property type="entry name" value="CARRIER DOMAIN-CONTAINING PROTEIN"/>
    <property type="match status" value="1"/>
</dbReference>
<dbReference type="Pfam" id="PF00550">
    <property type="entry name" value="PP-binding"/>
    <property type="match status" value="1"/>
</dbReference>
<dbReference type="SUPFAM" id="SSF47336">
    <property type="entry name" value="ACP-like"/>
    <property type="match status" value="1"/>
</dbReference>
<dbReference type="PROSITE" id="PS50075">
    <property type="entry name" value="CARRIER"/>
    <property type="match status" value="1"/>
</dbReference>
<accession>Q83N02</accession>
<name>ACP_TROWT</name>
<evidence type="ECO:0000255" key="1">
    <source>
        <dbReference type="HAMAP-Rule" id="MF_01217"/>
    </source>
</evidence>
<evidence type="ECO:0000255" key="2">
    <source>
        <dbReference type="PROSITE-ProRule" id="PRU00258"/>
    </source>
</evidence>
<sequence length="82" mass="9022">MSLSREKVLESIAQIVHDETGIDKGSVQLDKAFVDDLDIDSISMMTIVVNAEEKYGIEIPDDKVRELRTVGDAVDFIIAAKA</sequence>
<gene>
    <name evidence="1" type="primary">acpP</name>
    <name type="ordered locus">TWT_252</name>
</gene>
<proteinExistence type="inferred from homology"/>
<feature type="chain" id="PRO_0000180212" description="Acyl carrier protein">
    <location>
        <begin position="1"/>
        <end position="82"/>
    </location>
</feature>
<feature type="domain" description="Carrier" evidence="2">
    <location>
        <begin position="3"/>
        <end position="81"/>
    </location>
</feature>
<feature type="modified residue" description="O-(pantetheine 4'-phosphoryl)serine" evidence="2">
    <location>
        <position position="41"/>
    </location>
</feature>
<protein>
    <recommendedName>
        <fullName evidence="1">Acyl carrier protein</fullName>
        <shortName evidence="1">ACP</shortName>
    </recommendedName>
</protein>
<organism>
    <name type="scientific">Tropheryma whipplei (strain Twist)</name>
    <name type="common">Whipple's bacillus</name>
    <dbReference type="NCBI Taxonomy" id="203267"/>
    <lineage>
        <taxon>Bacteria</taxon>
        <taxon>Bacillati</taxon>
        <taxon>Actinomycetota</taxon>
        <taxon>Actinomycetes</taxon>
        <taxon>Micrococcales</taxon>
        <taxon>Tropherymataceae</taxon>
        <taxon>Tropheryma</taxon>
    </lineage>
</organism>
<reference key="1">
    <citation type="journal article" date="2003" name="Genome Res.">
        <title>Tropheryma whipplei twist: a human pathogenic Actinobacteria with a reduced genome.</title>
        <authorList>
            <person name="Raoult D."/>
            <person name="Ogata H."/>
            <person name="Audic S."/>
            <person name="Robert C."/>
            <person name="Suhre K."/>
            <person name="Drancourt M."/>
            <person name="Claverie J.-M."/>
        </authorList>
    </citation>
    <scope>NUCLEOTIDE SEQUENCE [LARGE SCALE GENOMIC DNA]</scope>
    <source>
        <strain>Twist</strain>
    </source>
</reference>
<comment type="function">
    <text evidence="1">Carrier of the growing fatty acid chain in fatty acid biosynthesis.</text>
</comment>
<comment type="pathway">
    <text evidence="1">Lipid metabolism; fatty acid biosynthesis.</text>
</comment>
<comment type="subcellular location">
    <subcellularLocation>
        <location evidence="1">Cytoplasm</location>
    </subcellularLocation>
</comment>
<comment type="PTM">
    <text evidence="1">4'-phosphopantetheine is transferred from CoA to a specific serine of apo-ACP by AcpS. This modification is essential for activity because fatty acids are bound in thioester linkage to the sulfhydryl of the prosthetic group.</text>
</comment>
<comment type="similarity">
    <text evidence="1">Belongs to the acyl carrier protein (ACP) family.</text>
</comment>